<feature type="chain" id="PRO_0000283212" description="F-box/kelch-repeat protein At3g08810">
    <location>
        <begin position="1"/>
        <end position="343"/>
    </location>
</feature>
<feature type="domain" description="F-box">
    <location>
        <begin position="20"/>
        <end position="66"/>
    </location>
</feature>
<feature type="repeat" description="Kelch 1">
    <location>
        <begin position="134"/>
        <end position="181"/>
    </location>
</feature>
<feature type="repeat" description="Kelch 2">
    <location>
        <begin position="183"/>
        <end position="224"/>
    </location>
</feature>
<feature type="repeat" description="Kelch 3">
    <location>
        <begin position="225"/>
        <end position="271"/>
    </location>
</feature>
<feature type="region of interest" description="Disordered" evidence="1">
    <location>
        <begin position="1"/>
        <end position="25"/>
    </location>
</feature>
<feature type="compositionally biased region" description="Basic residues" evidence="1">
    <location>
        <begin position="1"/>
        <end position="15"/>
    </location>
</feature>
<accession>Q9C9X9</accession>
<accession>Q9SR81</accession>
<keyword id="KW-0880">Kelch repeat</keyword>
<keyword id="KW-1185">Reference proteome</keyword>
<keyword id="KW-0677">Repeat</keyword>
<sequence>MSYPERKRKRSRWSKPHSTQNPSPSLPDDVLLSIFARVSRLYYPTLSHVSESFRSLLASPELYKARSLSGNTEICLYVCLRCSTGYRWFSLSRKPDQTLTYEERKSSGYALARVPIPGGSPNVRSSSLVAVGSDIYNICGSINKASSSSSVSILDCQSHTWREAPSLPVELSSISASVRDGNQGGHGYSDSRKNSFKVFAYNSKEGRWDHLVGLGAGSFMLPDSYCVIDNVSYSVSDGMFRWYDTEVRRWKDLRGLFQLPKFSAGACVILADYGGKMAVLWDQLPYHHGFHKTIQCAVIALERRTSFVFREKSCQIWGKVEWVDDLLTVPTSYDLVKVLVATL</sequence>
<protein>
    <recommendedName>
        <fullName>F-box/kelch-repeat protein At3g08810</fullName>
    </recommendedName>
</protein>
<gene>
    <name type="ordered locus">At3g08810</name>
    <name type="ORF">F17O14.28</name>
    <name type="ORF">T16O11.26</name>
</gene>
<proteinExistence type="evidence at transcript level"/>
<dbReference type="EMBL" id="AC010871">
    <property type="protein sequence ID" value="AAF07840.1"/>
    <property type="molecule type" value="Genomic_DNA"/>
</dbReference>
<dbReference type="EMBL" id="AC012562">
    <property type="protein sequence ID" value="AAG51346.1"/>
    <property type="molecule type" value="Genomic_DNA"/>
</dbReference>
<dbReference type="EMBL" id="CP002686">
    <property type="protein sequence ID" value="AEE74682.1"/>
    <property type="molecule type" value="Genomic_DNA"/>
</dbReference>
<dbReference type="RefSeq" id="NP_187493.1">
    <property type="nucleotide sequence ID" value="NM_111715.3"/>
</dbReference>
<dbReference type="SMR" id="Q9C9X9"/>
<dbReference type="FunCoup" id="Q9C9X9">
    <property type="interactions" value="1"/>
</dbReference>
<dbReference type="PaxDb" id="3702-AT3G08810.1"/>
<dbReference type="EnsemblPlants" id="AT3G08810.1">
    <property type="protein sequence ID" value="AT3G08810.1"/>
    <property type="gene ID" value="AT3G08810"/>
</dbReference>
<dbReference type="GeneID" id="820028"/>
<dbReference type="Gramene" id="AT3G08810.1">
    <property type="protein sequence ID" value="AT3G08810.1"/>
    <property type="gene ID" value="AT3G08810"/>
</dbReference>
<dbReference type="KEGG" id="ath:AT3G08810"/>
<dbReference type="Araport" id="AT3G08810"/>
<dbReference type="TAIR" id="AT3G08810"/>
<dbReference type="eggNOG" id="KOG1072">
    <property type="taxonomic scope" value="Eukaryota"/>
</dbReference>
<dbReference type="HOGENOM" id="CLU_032521_1_2_1"/>
<dbReference type="InParanoid" id="Q9C9X9"/>
<dbReference type="OMA" id="GVCEIWG"/>
<dbReference type="PhylomeDB" id="Q9C9X9"/>
<dbReference type="PRO" id="PR:Q9C9X9"/>
<dbReference type="Proteomes" id="UP000006548">
    <property type="component" value="Chromosome 3"/>
</dbReference>
<dbReference type="ExpressionAtlas" id="Q9C9X9">
    <property type="expression patterns" value="baseline and differential"/>
</dbReference>
<dbReference type="CDD" id="cd22152">
    <property type="entry name" value="F-box_AtAFR-like"/>
    <property type="match status" value="1"/>
</dbReference>
<dbReference type="Gene3D" id="2.120.10.80">
    <property type="entry name" value="Kelch-type beta propeller"/>
    <property type="match status" value="1"/>
</dbReference>
<dbReference type="InterPro" id="IPR036047">
    <property type="entry name" value="F-box-like_dom_sf"/>
</dbReference>
<dbReference type="InterPro" id="IPR050354">
    <property type="entry name" value="F-box/kelch-repeat_ARATH"/>
</dbReference>
<dbReference type="InterPro" id="IPR001810">
    <property type="entry name" value="F-box_dom"/>
</dbReference>
<dbReference type="InterPro" id="IPR015915">
    <property type="entry name" value="Kelch-typ_b-propeller"/>
</dbReference>
<dbReference type="InterPro" id="IPR011498">
    <property type="entry name" value="Kelch_2"/>
</dbReference>
<dbReference type="PANTHER" id="PTHR24414">
    <property type="entry name" value="F-BOX/KELCH-REPEAT PROTEIN SKIP4"/>
    <property type="match status" value="1"/>
</dbReference>
<dbReference type="PANTHER" id="PTHR24414:SF184">
    <property type="entry name" value="GALACTOSE OXIDASE_KELCH REPEAT SUPERFAMILY PROTEIN"/>
    <property type="match status" value="1"/>
</dbReference>
<dbReference type="Pfam" id="PF00646">
    <property type="entry name" value="F-box"/>
    <property type="match status" value="1"/>
</dbReference>
<dbReference type="Pfam" id="PF07646">
    <property type="entry name" value="Kelch_2"/>
    <property type="match status" value="1"/>
</dbReference>
<dbReference type="Pfam" id="PF25210">
    <property type="entry name" value="Kelch_FKB95"/>
    <property type="match status" value="1"/>
</dbReference>
<dbReference type="SMART" id="SM00256">
    <property type="entry name" value="FBOX"/>
    <property type="match status" value="1"/>
</dbReference>
<dbReference type="SUPFAM" id="SSF81383">
    <property type="entry name" value="F-box domain"/>
    <property type="match status" value="1"/>
</dbReference>
<dbReference type="SUPFAM" id="SSF117281">
    <property type="entry name" value="Kelch motif"/>
    <property type="match status" value="1"/>
</dbReference>
<organism>
    <name type="scientific">Arabidopsis thaliana</name>
    <name type="common">Mouse-ear cress</name>
    <dbReference type="NCBI Taxonomy" id="3702"/>
    <lineage>
        <taxon>Eukaryota</taxon>
        <taxon>Viridiplantae</taxon>
        <taxon>Streptophyta</taxon>
        <taxon>Embryophyta</taxon>
        <taxon>Tracheophyta</taxon>
        <taxon>Spermatophyta</taxon>
        <taxon>Magnoliopsida</taxon>
        <taxon>eudicotyledons</taxon>
        <taxon>Gunneridae</taxon>
        <taxon>Pentapetalae</taxon>
        <taxon>rosids</taxon>
        <taxon>malvids</taxon>
        <taxon>Brassicales</taxon>
        <taxon>Brassicaceae</taxon>
        <taxon>Camelineae</taxon>
        <taxon>Arabidopsis</taxon>
    </lineage>
</organism>
<evidence type="ECO:0000256" key="1">
    <source>
        <dbReference type="SAM" id="MobiDB-lite"/>
    </source>
</evidence>
<reference key="1">
    <citation type="journal article" date="2000" name="Nature">
        <title>Sequence and analysis of chromosome 3 of the plant Arabidopsis thaliana.</title>
        <authorList>
            <person name="Salanoubat M."/>
            <person name="Lemcke K."/>
            <person name="Rieger M."/>
            <person name="Ansorge W."/>
            <person name="Unseld M."/>
            <person name="Fartmann B."/>
            <person name="Valle G."/>
            <person name="Bloecker H."/>
            <person name="Perez-Alonso M."/>
            <person name="Obermaier B."/>
            <person name="Delseny M."/>
            <person name="Boutry M."/>
            <person name="Grivell L.A."/>
            <person name="Mache R."/>
            <person name="Puigdomenech P."/>
            <person name="De Simone V."/>
            <person name="Choisne N."/>
            <person name="Artiguenave F."/>
            <person name="Robert C."/>
            <person name="Brottier P."/>
            <person name="Wincker P."/>
            <person name="Cattolico L."/>
            <person name="Weissenbach J."/>
            <person name="Saurin W."/>
            <person name="Quetier F."/>
            <person name="Schaefer M."/>
            <person name="Mueller-Auer S."/>
            <person name="Gabel C."/>
            <person name="Fuchs M."/>
            <person name="Benes V."/>
            <person name="Wurmbach E."/>
            <person name="Drzonek H."/>
            <person name="Erfle H."/>
            <person name="Jordan N."/>
            <person name="Bangert S."/>
            <person name="Wiedelmann R."/>
            <person name="Kranz H."/>
            <person name="Voss H."/>
            <person name="Holland R."/>
            <person name="Brandt P."/>
            <person name="Nyakatura G."/>
            <person name="Vezzi A."/>
            <person name="D'Angelo M."/>
            <person name="Pallavicini A."/>
            <person name="Toppo S."/>
            <person name="Simionati B."/>
            <person name="Conrad A."/>
            <person name="Hornischer K."/>
            <person name="Kauer G."/>
            <person name="Loehnert T.-H."/>
            <person name="Nordsiek G."/>
            <person name="Reichelt J."/>
            <person name="Scharfe M."/>
            <person name="Schoen O."/>
            <person name="Bargues M."/>
            <person name="Terol J."/>
            <person name="Climent J."/>
            <person name="Navarro P."/>
            <person name="Collado C."/>
            <person name="Perez-Perez A."/>
            <person name="Ottenwaelder B."/>
            <person name="Duchemin D."/>
            <person name="Cooke R."/>
            <person name="Laudie M."/>
            <person name="Berger-Llauro C."/>
            <person name="Purnelle B."/>
            <person name="Masuy D."/>
            <person name="de Haan M."/>
            <person name="Maarse A.C."/>
            <person name="Alcaraz J.-P."/>
            <person name="Cottet A."/>
            <person name="Casacuberta E."/>
            <person name="Monfort A."/>
            <person name="Argiriou A."/>
            <person name="Flores M."/>
            <person name="Liguori R."/>
            <person name="Vitale D."/>
            <person name="Mannhaupt G."/>
            <person name="Haase D."/>
            <person name="Schoof H."/>
            <person name="Rudd S."/>
            <person name="Zaccaria P."/>
            <person name="Mewes H.-W."/>
            <person name="Mayer K.F.X."/>
            <person name="Kaul S."/>
            <person name="Town C.D."/>
            <person name="Koo H.L."/>
            <person name="Tallon L.J."/>
            <person name="Jenkins J."/>
            <person name="Rooney T."/>
            <person name="Rizzo M."/>
            <person name="Walts A."/>
            <person name="Utterback T."/>
            <person name="Fujii C.Y."/>
            <person name="Shea T.P."/>
            <person name="Creasy T.H."/>
            <person name="Haas B."/>
            <person name="Maiti R."/>
            <person name="Wu D."/>
            <person name="Peterson J."/>
            <person name="Van Aken S."/>
            <person name="Pai G."/>
            <person name="Militscher J."/>
            <person name="Sellers P."/>
            <person name="Gill J.E."/>
            <person name="Feldblyum T.V."/>
            <person name="Preuss D."/>
            <person name="Lin X."/>
            <person name="Nierman W.C."/>
            <person name="Salzberg S.L."/>
            <person name="White O."/>
            <person name="Venter J.C."/>
            <person name="Fraser C.M."/>
            <person name="Kaneko T."/>
            <person name="Nakamura Y."/>
            <person name="Sato S."/>
            <person name="Kato T."/>
            <person name="Asamizu E."/>
            <person name="Sasamoto S."/>
            <person name="Kimura T."/>
            <person name="Idesawa K."/>
            <person name="Kawashima K."/>
            <person name="Kishida Y."/>
            <person name="Kiyokawa C."/>
            <person name="Kohara M."/>
            <person name="Matsumoto M."/>
            <person name="Matsuno A."/>
            <person name="Muraki A."/>
            <person name="Nakayama S."/>
            <person name="Nakazaki N."/>
            <person name="Shinpo S."/>
            <person name="Takeuchi C."/>
            <person name="Wada T."/>
            <person name="Watanabe A."/>
            <person name="Yamada M."/>
            <person name="Yasuda M."/>
            <person name="Tabata S."/>
        </authorList>
    </citation>
    <scope>NUCLEOTIDE SEQUENCE [LARGE SCALE GENOMIC DNA]</scope>
    <source>
        <strain>cv. Columbia</strain>
    </source>
</reference>
<reference key="2">
    <citation type="journal article" date="2017" name="Plant J.">
        <title>Araport11: a complete reannotation of the Arabidopsis thaliana reference genome.</title>
        <authorList>
            <person name="Cheng C.Y."/>
            <person name="Krishnakumar V."/>
            <person name="Chan A.P."/>
            <person name="Thibaud-Nissen F."/>
            <person name="Schobel S."/>
            <person name="Town C.D."/>
        </authorList>
    </citation>
    <scope>GENOME REANNOTATION</scope>
    <source>
        <strain>cv. Columbia</strain>
    </source>
</reference>
<name>FBK52_ARATH</name>